<organism>
    <name type="scientific">Homo sapiens</name>
    <name type="common">Human</name>
    <dbReference type="NCBI Taxonomy" id="9606"/>
    <lineage>
        <taxon>Eukaryota</taxon>
        <taxon>Metazoa</taxon>
        <taxon>Chordata</taxon>
        <taxon>Craniata</taxon>
        <taxon>Vertebrata</taxon>
        <taxon>Euteleostomi</taxon>
        <taxon>Mammalia</taxon>
        <taxon>Eutheria</taxon>
        <taxon>Euarchontoglires</taxon>
        <taxon>Primates</taxon>
        <taxon>Haplorrhini</taxon>
        <taxon>Catarrhini</taxon>
        <taxon>Hominidae</taxon>
        <taxon>Homo</taxon>
    </lineage>
</organism>
<evidence type="ECO:0000250" key="1">
    <source>
        <dbReference type="UniProtKB" id="Q9Z2A5"/>
    </source>
</evidence>
<evidence type="ECO:0000256" key="2">
    <source>
        <dbReference type="SAM" id="MobiDB-lite"/>
    </source>
</evidence>
<evidence type="ECO:0000269" key="3">
    <source>
    </source>
</evidence>
<evidence type="ECO:0000269" key="4">
    <source>
    </source>
</evidence>
<evidence type="ECO:0000303" key="5">
    <source>
    </source>
</evidence>
<evidence type="ECO:0000303" key="6">
    <source>
    </source>
</evidence>
<evidence type="ECO:0000303" key="7">
    <source>
    </source>
</evidence>
<evidence type="ECO:0000305" key="8"/>
<evidence type="ECO:0000312" key="9">
    <source>
        <dbReference type="HGNC" id="HGNC:782"/>
    </source>
</evidence>
<evidence type="ECO:0007744" key="10">
    <source>
    </source>
</evidence>
<evidence type="ECO:0007744" key="11">
    <source>
    </source>
</evidence>
<sequence>MAFWAGGSPSVVDYFPSEDFYRCGYCKNESGSRSNGMWAHSMTVQDYQDLIDRGWRRSGKYVYKPVMNQTCCPQYTIRCRPLQFQPSKSHKKVLKKMLKFLAKGEVPKGSCEDEPMDSTMDDAVAGDFALINKLDIQCDLKTLSDDIKESLESEGKNSKKEEPQELLQSQDFVGEKLGSGEPSHSVKVHTVPKPGKGADLSKPPCRKAKEIRKERKRLKLMQQNPAGELEGFQAQGHPPSLFPPKAKSNQPKSLEDLIFESLPENASHKLEVRVVRSSPPSSQFKATLLESYQVYKRYQMVIHKNPPDTPTESQFTRFLCSSPLEAETPPNGPDCGYGSFHQQYWLDGKIIAVGVIDILPNCVSSVYLYYDPDYSFLSLGVYSALREIAFTRQLHEKTSQLSYYYMGFYIHSCPKMKYKGQYRPSDLLCPETYVWVPIEQCLPSLENSKYCRFNQDPEAVDEDRSTEPDRLQVFHKRAIMPYGVYKKQQKDPSEEAAVLQYASLVGQKCSERMLLFRN</sequence>
<feature type="chain" id="PRO_0000195088" description="Arginyl-tRNA--protein transferase 1">
    <location>
        <begin position="1"/>
        <end position="518"/>
    </location>
</feature>
<feature type="region of interest" description="Disordered" evidence="2">
    <location>
        <begin position="175"/>
        <end position="203"/>
    </location>
</feature>
<feature type="modified residue" description="Phosphoserine" evidence="10 11">
    <location>
        <position position="169"/>
    </location>
</feature>
<feature type="splice variant" id="VSP_000336" description="In isoform ATE1-2." evidence="5 7">
    <original>VVRSSPPSSQFKATLLESYQVYKRYQMVIHKNPPDTPTESQ</original>
    <variation>LVPVSFEDPEFKSSFSQSFSLYVKYQVAIHQDPPDECGKTE</variation>
    <location>
        <begin position="274"/>
        <end position="314"/>
    </location>
</feature>
<feature type="sequence conflict" description="In Ref. 4; AAD12366." evidence="8" ref="4">
    <original>AGGSPSV</original>
    <variation>GGGFAAS</variation>
    <location>
        <begin position="5"/>
        <end position="11"/>
    </location>
</feature>
<dbReference type="EC" id="2.3.2.8" evidence="3"/>
<dbReference type="EMBL" id="AC025947">
    <property type="status" value="NOT_ANNOTATED_CDS"/>
    <property type="molecule type" value="Genomic_DNA"/>
</dbReference>
<dbReference type="EMBL" id="AL731542">
    <property type="status" value="NOT_ANNOTATED_CDS"/>
    <property type="molecule type" value="Genomic_DNA"/>
</dbReference>
<dbReference type="EMBL" id="AL731566">
    <property type="status" value="NOT_ANNOTATED_CDS"/>
    <property type="molecule type" value="Genomic_DNA"/>
</dbReference>
<dbReference type="EMBL" id="CH471066">
    <property type="protein sequence ID" value="EAW49334.1"/>
    <property type="molecule type" value="Genomic_DNA"/>
</dbReference>
<dbReference type="EMBL" id="BC022026">
    <property type="protein sequence ID" value="AAH22026.2"/>
    <property type="molecule type" value="mRNA"/>
</dbReference>
<dbReference type="EMBL" id="AF079098">
    <property type="protein sequence ID" value="AAD12366.1"/>
    <property type="molecule type" value="mRNA"/>
</dbReference>
<dbReference type="EMBL" id="AF079099">
    <property type="protein sequence ID" value="AAD12367.1"/>
    <property type="molecule type" value="mRNA"/>
</dbReference>
<dbReference type="CCDS" id="CCDS31299.1">
    <molecule id="O95260-2"/>
</dbReference>
<dbReference type="CCDS" id="CCDS31300.1">
    <molecule id="O95260-1"/>
</dbReference>
<dbReference type="RefSeq" id="NP_001001976.1">
    <molecule id="O95260-1"/>
    <property type="nucleotide sequence ID" value="NM_001001976.3"/>
</dbReference>
<dbReference type="RefSeq" id="NP_001275663.1">
    <property type="nucleotide sequence ID" value="NM_001288734.1"/>
</dbReference>
<dbReference type="RefSeq" id="NP_001275664.1">
    <property type="nucleotide sequence ID" value="NM_001288735.1"/>
</dbReference>
<dbReference type="RefSeq" id="NP_001275665.1">
    <property type="nucleotide sequence ID" value="NM_001288736.1"/>
</dbReference>
<dbReference type="RefSeq" id="NP_008972.2">
    <molecule id="O95260-2"/>
    <property type="nucleotide sequence ID" value="NM_007041.4"/>
</dbReference>
<dbReference type="PDB" id="8TZV">
    <property type="method" value="EM"/>
    <property type="resolution" value="2.80 A"/>
    <property type="chains" value="A/B=2-518"/>
</dbReference>
<dbReference type="PDB" id="8UAU">
    <property type="method" value="EM"/>
    <property type="resolution" value="5.70 A"/>
    <property type="chains" value="A=2-518"/>
</dbReference>
<dbReference type="PDBsum" id="8TZV"/>
<dbReference type="PDBsum" id="8UAU"/>
<dbReference type="EMDB" id="EMD-41770"/>
<dbReference type="EMDB" id="EMD-42071"/>
<dbReference type="SMR" id="O95260"/>
<dbReference type="BioGRID" id="116282">
    <property type="interactions" value="103"/>
</dbReference>
<dbReference type="FunCoup" id="O95260">
    <property type="interactions" value="4686"/>
</dbReference>
<dbReference type="IntAct" id="O95260">
    <property type="interactions" value="70"/>
</dbReference>
<dbReference type="MINT" id="O95260"/>
<dbReference type="STRING" id="9606.ENSP00000224652"/>
<dbReference type="GlyCosmos" id="O95260">
    <property type="glycosylation" value="2 sites, 1 glycan"/>
</dbReference>
<dbReference type="GlyGen" id="O95260">
    <property type="glycosylation" value="2 sites, 1 O-linked glycan (2 sites)"/>
</dbReference>
<dbReference type="iPTMnet" id="O95260"/>
<dbReference type="PhosphoSitePlus" id="O95260"/>
<dbReference type="BioMuta" id="ATE1"/>
<dbReference type="jPOST" id="O95260"/>
<dbReference type="MassIVE" id="O95260"/>
<dbReference type="PaxDb" id="9606-ENSP00000224652"/>
<dbReference type="PeptideAtlas" id="O95260"/>
<dbReference type="ProteomicsDB" id="50757">
    <molecule id="O95260-1"/>
</dbReference>
<dbReference type="ProteomicsDB" id="50758">
    <molecule id="O95260-2"/>
</dbReference>
<dbReference type="Pumba" id="O95260"/>
<dbReference type="Antibodypedia" id="32214">
    <property type="antibodies" value="191 antibodies from 32 providers"/>
</dbReference>
<dbReference type="DNASU" id="11101"/>
<dbReference type="Ensembl" id="ENST00000224652.12">
    <molecule id="O95260-1"/>
    <property type="protein sequence ID" value="ENSP00000224652.6"/>
    <property type="gene ID" value="ENSG00000107669.19"/>
</dbReference>
<dbReference type="Ensembl" id="ENST00000369043.8">
    <molecule id="O95260-2"/>
    <property type="protein sequence ID" value="ENSP00000358039.3"/>
    <property type="gene ID" value="ENSG00000107669.19"/>
</dbReference>
<dbReference type="Ensembl" id="ENST00000685007.1">
    <molecule id="O95260-2"/>
    <property type="protein sequence ID" value="ENSP00000508990.1"/>
    <property type="gene ID" value="ENSG00000107669.19"/>
</dbReference>
<dbReference type="GeneID" id="11101"/>
<dbReference type="KEGG" id="hsa:11101"/>
<dbReference type="MANE-Select" id="ENST00000224652.12">
    <property type="protein sequence ID" value="ENSP00000224652.6"/>
    <property type="RefSeq nucleotide sequence ID" value="NM_001001976.3"/>
    <property type="RefSeq protein sequence ID" value="NP_001001976.1"/>
</dbReference>
<dbReference type="UCSC" id="uc001lfp.5">
    <molecule id="O95260-1"/>
    <property type="organism name" value="human"/>
</dbReference>
<dbReference type="AGR" id="HGNC:782"/>
<dbReference type="CTD" id="11101"/>
<dbReference type="DisGeNET" id="11101"/>
<dbReference type="GeneCards" id="ATE1"/>
<dbReference type="HGNC" id="HGNC:782">
    <property type="gene designation" value="ATE1"/>
</dbReference>
<dbReference type="HPA" id="ENSG00000107669">
    <property type="expression patterns" value="Low tissue specificity"/>
</dbReference>
<dbReference type="MIM" id="607103">
    <property type="type" value="gene"/>
</dbReference>
<dbReference type="neXtProt" id="NX_O95260"/>
<dbReference type="OpenTargets" id="ENSG00000107669"/>
<dbReference type="PharmGKB" id="PA25082"/>
<dbReference type="VEuPathDB" id="HostDB:ENSG00000107669"/>
<dbReference type="eggNOG" id="KOG1193">
    <property type="taxonomic scope" value="Eukaryota"/>
</dbReference>
<dbReference type="GeneTree" id="ENSGT00500000044926"/>
<dbReference type="HOGENOM" id="CLU_020349_1_1_1"/>
<dbReference type="InParanoid" id="O95260"/>
<dbReference type="OMA" id="SDRMVYS"/>
<dbReference type="OrthoDB" id="74183at2759"/>
<dbReference type="PAN-GO" id="O95260">
    <property type="GO annotations" value="3 GO annotations based on evolutionary models"/>
</dbReference>
<dbReference type="PhylomeDB" id="O95260"/>
<dbReference type="TreeFam" id="TF105976"/>
<dbReference type="BioCyc" id="MetaCyc:HS03017-MONOMER"/>
<dbReference type="BRENDA" id="2.3.2.8">
    <property type="organism ID" value="2681"/>
</dbReference>
<dbReference type="PathwayCommons" id="O95260"/>
<dbReference type="SignaLink" id="O95260"/>
<dbReference type="SIGNOR" id="O95260"/>
<dbReference type="BioGRID-ORCS" id="11101">
    <property type="hits" value="18 hits in 1166 CRISPR screens"/>
</dbReference>
<dbReference type="ChiTaRS" id="ATE1">
    <property type="organism name" value="human"/>
</dbReference>
<dbReference type="GenomeRNAi" id="11101"/>
<dbReference type="Pharos" id="O95260">
    <property type="development level" value="Tbio"/>
</dbReference>
<dbReference type="PRO" id="PR:O95260"/>
<dbReference type="Proteomes" id="UP000005640">
    <property type="component" value="Chromosome 10"/>
</dbReference>
<dbReference type="RNAct" id="O95260">
    <property type="molecule type" value="protein"/>
</dbReference>
<dbReference type="Bgee" id="ENSG00000107669">
    <property type="expression patterns" value="Expressed in tibialis anterior and 195 other cell types or tissues"/>
</dbReference>
<dbReference type="ExpressionAtlas" id="O95260">
    <property type="expression patterns" value="baseline and differential"/>
</dbReference>
<dbReference type="GO" id="GO:0005737">
    <property type="term" value="C:cytoplasm"/>
    <property type="evidence" value="ECO:0000314"/>
    <property type="project" value="UniProtKB"/>
</dbReference>
<dbReference type="GO" id="GO:0005634">
    <property type="term" value="C:nucleus"/>
    <property type="evidence" value="ECO:0000314"/>
    <property type="project" value="UniProtKB"/>
</dbReference>
<dbReference type="GO" id="GO:0004057">
    <property type="term" value="F:arginyl-tRNA--protein transferase activity"/>
    <property type="evidence" value="ECO:0000314"/>
    <property type="project" value="UniProtKB"/>
</dbReference>
<dbReference type="GO" id="GO:0010498">
    <property type="term" value="P:proteasomal protein catabolic process"/>
    <property type="evidence" value="ECO:0000315"/>
    <property type="project" value="MGI"/>
</dbReference>
<dbReference type="GO" id="GO:0016598">
    <property type="term" value="P:protein arginylation"/>
    <property type="evidence" value="ECO:0000303"/>
    <property type="project" value="UniProtKB"/>
</dbReference>
<dbReference type="GO" id="GO:0006979">
    <property type="term" value="P:response to oxidative stress"/>
    <property type="evidence" value="ECO:0000314"/>
    <property type="project" value="UniProt"/>
</dbReference>
<dbReference type="GO" id="GO:0006511">
    <property type="term" value="P:ubiquitin-dependent protein catabolic process"/>
    <property type="evidence" value="ECO:0000314"/>
    <property type="project" value="UniProtKB"/>
</dbReference>
<dbReference type="InterPro" id="IPR016181">
    <property type="entry name" value="Acyl_CoA_acyltransferase"/>
</dbReference>
<dbReference type="InterPro" id="IPR017137">
    <property type="entry name" value="Arg-tRNA-P_Trfase_1_euk"/>
</dbReference>
<dbReference type="InterPro" id="IPR030700">
    <property type="entry name" value="N-end_Aminoacyl_Trfase"/>
</dbReference>
<dbReference type="InterPro" id="IPR007472">
    <property type="entry name" value="N-end_Aminoacyl_Trfase_C"/>
</dbReference>
<dbReference type="InterPro" id="IPR007471">
    <property type="entry name" value="N-end_Aminoacyl_Trfase_N"/>
</dbReference>
<dbReference type="PANTHER" id="PTHR21367">
    <property type="entry name" value="ARGININE-TRNA-PROTEIN TRANSFERASE 1"/>
    <property type="match status" value="1"/>
</dbReference>
<dbReference type="PANTHER" id="PTHR21367:SF1">
    <property type="entry name" value="ARGINYL-TRNA--PROTEIN TRANSFERASE 1"/>
    <property type="match status" value="1"/>
</dbReference>
<dbReference type="Pfam" id="PF04377">
    <property type="entry name" value="ATE_C"/>
    <property type="match status" value="1"/>
</dbReference>
<dbReference type="Pfam" id="PF04376">
    <property type="entry name" value="ATE_N"/>
    <property type="match status" value="1"/>
</dbReference>
<dbReference type="PIRSF" id="PIRSF037207">
    <property type="entry name" value="ATE1_euk"/>
    <property type="match status" value="1"/>
</dbReference>
<dbReference type="SUPFAM" id="SSF55729">
    <property type="entry name" value="Acyl-CoA N-acyltransferases (Nat)"/>
    <property type="match status" value="1"/>
</dbReference>
<comment type="function">
    <text evidence="1 3">Involved in the post-translational conjugation of arginine to the N-terminal aspartate or glutamate of a protein (PubMed:34893540). This arginylation is required for degradation of the protein via the ubiquitin pathway (PubMed:34893540). Does not arginylate cysteine residues (By similarity).</text>
</comment>
<comment type="catalytic activity">
    <reaction evidence="3">
        <text>an N-terminal L-alpha-aminoacyl-[protein] + L-arginyl-tRNA(Arg) = an N-terminal L-arginyl-L-aminoacyl-[protein] + tRNA(Arg) + H(+)</text>
        <dbReference type="Rhea" id="RHEA:10208"/>
        <dbReference type="Rhea" id="RHEA-COMP:9658"/>
        <dbReference type="Rhea" id="RHEA-COMP:9673"/>
        <dbReference type="Rhea" id="RHEA-COMP:10636"/>
        <dbReference type="Rhea" id="RHEA-COMP:10638"/>
        <dbReference type="ChEBI" id="CHEBI:15378"/>
        <dbReference type="ChEBI" id="CHEBI:78442"/>
        <dbReference type="ChEBI" id="CHEBI:78513"/>
        <dbReference type="ChEBI" id="CHEBI:78597"/>
        <dbReference type="ChEBI" id="CHEBI:83562"/>
        <dbReference type="EC" id="2.3.2.8"/>
    </reaction>
    <physiologicalReaction direction="left-to-right" evidence="3">
        <dbReference type="Rhea" id="RHEA:10209"/>
    </physiologicalReaction>
</comment>
<comment type="subunit">
    <text evidence="1">Monomer. Interacts with LIAT1; LIAT1 is not a substrate of ATE1, the interaction takes place in the cytoplasm and seems to increase ATE1 arginyltransferase activity.</text>
</comment>
<comment type="interaction">
    <interactant intactId="EBI-1043378">
        <id>O95260</id>
    </interactant>
    <interactant intactId="EBI-943588">
        <id>Q16633</id>
        <label>POU2AF1</label>
    </interactant>
    <organismsDiffer>false</organismsDiffer>
    <experiments>2</experiments>
</comment>
<comment type="interaction">
    <interactant intactId="EBI-1043378">
        <id>O95260</id>
    </interactant>
    <interactant intactId="EBI-349968">
        <id>O43463</id>
        <label>SUV39H1</label>
    </interactant>
    <organismsDiffer>false</organismsDiffer>
    <experiments>2</experiments>
</comment>
<comment type="subcellular location">
    <subcellularLocation>
        <location evidence="4">Nucleus</location>
    </subcellularLocation>
    <subcellularLocation>
        <location evidence="4">Cytoplasm</location>
    </subcellularLocation>
</comment>
<comment type="alternative products">
    <event type="alternative splicing"/>
    <isoform>
        <id>O95260-1</id>
        <name>ATE1-1</name>
        <sequence type="displayed"/>
    </isoform>
    <isoform>
        <id>O95260-2</id>
        <name>ATE1-2</name>
        <sequence type="described" ref="VSP_000336"/>
    </isoform>
</comment>
<comment type="similarity">
    <text evidence="8">Belongs to the R-transferase family.</text>
</comment>
<comment type="caution">
    <text evidence="8">It is uncertain whether Met-1 or Met-37 is the initiator.</text>
</comment>
<accession>O95260</accession>
<accession>O95261</accession>
<accession>Q5SQQ3</accession>
<accession>Q8WW04</accession>
<name>ATE1_HUMAN</name>
<proteinExistence type="evidence at protein level"/>
<reference key="1">
    <citation type="journal article" date="2004" name="Nature">
        <title>The DNA sequence and comparative analysis of human chromosome 10.</title>
        <authorList>
            <person name="Deloukas P."/>
            <person name="Earthrowl M.E."/>
            <person name="Grafham D.V."/>
            <person name="Rubenfield M."/>
            <person name="French L."/>
            <person name="Steward C.A."/>
            <person name="Sims S.K."/>
            <person name="Jones M.C."/>
            <person name="Searle S."/>
            <person name="Scott C."/>
            <person name="Howe K."/>
            <person name="Hunt S.E."/>
            <person name="Andrews T.D."/>
            <person name="Gilbert J.G.R."/>
            <person name="Swarbreck D."/>
            <person name="Ashurst J.L."/>
            <person name="Taylor A."/>
            <person name="Battles J."/>
            <person name="Bird C.P."/>
            <person name="Ainscough R."/>
            <person name="Almeida J.P."/>
            <person name="Ashwell R.I.S."/>
            <person name="Ambrose K.D."/>
            <person name="Babbage A.K."/>
            <person name="Bagguley C.L."/>
            <person name="Bailey J."/>
            <person name="Banerjee R."/>
            <person name="Bates K."/>
            <person name="Beasley H."/>
            <person name="Bray-Allen S."/>
            <person name="Brown A.J."/>
            <person name="Brown J.Y."/>
            <person name="Burford D.C."/>
            <person name="Burrill W."/>
            <person name="Burton J."/>
            <person name="Cahill P."/>
            <person name="Camire D."/>
            <person name="Carter N.P."/>
            <person name="Chapman J.C."/>
            <person name="Clark S.Y."/>
            <person name="Clarke G."/>
            <person name="Clee C.M."/>
            <person name="Clegg S."/>
            <person name="Corby N."/>
            <person name="Coulson A."/>
            <person name="Dhami P."/>
            <person name="Dutta I."/>
            <person name="Dunn M."/>
            <person name="Faulkner L."/>
            <person name="Frankish A."/>
            <person name="Frankland J.A."/>
            <person name="Garner P."/>
            <person name="Garnett J."/>
            <person name="Gribble S."/>
            <person name="Griffiths C."/>
            <person name="Grocock R."/>
            <person name="Gustafson E."/>
            <person name="Hammond S."/>
            <person name="Harley J.L."/>
            <person name="Hart E."/>
            <person name="Heath P.D."/>
            <person name="Ho T.P."/>
            <person name="Hopkins B."/>
            <person name="Horne J."/>
            <person name="Howden P.J."/>
            <person name="Huckle E."/>
            <person name="Hynds C."/>
            <person name="Johnson C."/>
            <person name="Johnson D."/>
            <person name="Kana A."/>
            <person name="Kay M."/>
            <person name="Kimberley A.M."/>
            <person name="Kershaw J.K."/>
            <person name="Kokkinaki M."/>
            <person name="Laird G.K."/>
            <person name="Lawlor S."/>
            <person name="Lee H.M."/>
            <person name="Leongamornlert D.A."/>
            <person name="Laird G."/>
            <person name="Lloyd C."/>
            <person name="Lloyd D.M."/>
            <person name="Loveland J."/>
            <person name="Lovell J."/>
            <person name="McLaren S."/>
            <person name="McLay K.E."/>
            <person name="McMurray A."/>
            <person name="Mashreghi-Mohammadi M."/>
            <person name="Matthews L."/>
            <person name="Milne S."/>
            <person name="Nickerson T."/>
            <person name="Nguyen M."/>
            <person name="Overton-Larty E."/>
            <person name="Palmer S.A."/>
            <person name="Pearce A.V."/>
            <person name="Peck A.I."/>
            <person name="Pelan S."/>
            <person name="Phillimore B."/>
            <person name="Porter K."/>
            <person name="Rice C.M."/>
            <person name="Rogosin A."/>
            <person name="Ross M.T."/>
            <person name="Sarafidou T."/>
            <person name="Sehra H.K."/>
            <person name="Shownkeen R."/>
            <person name="Skuce C.D."/>
            <person name="Smith M."/>
            <person name="Standring L."/>
            <person name="Sycamore N."/>
            <person name="Tester J."/>
            <person name="Thorpe A."/>
            <person name="Torcasso W."/>
            <person name="Tracey A."/>
            <person name="Tromans A."/>
            <person name="Tsolas J."/>
            <person name="Wall M."/>
            <person name="Walsh J."/>
            <person name="Wang H."/>
            <person name="Weinstock K."/>
            <person name="West A.P."/>
            <person name="Willey D.L."/>
            <person name="Whitehead S.L."/>
            <person name="Wilming L."/>
            <person name="Wray P.W."/>
            <person name="Young L."/>
            <person name="Chen Y."/>
            <person name="Lovering R.C."/>
            <person name="Moschonas N.K."/>
            <person name="Siebert R."/>
            <person name="Fechtel K."/>
            <person name="Bentley D."/>
            <person name="Durbin R.M."/>
            <person name="Hubbard T."/>
            <person name="Doucette-Stamm L."/>
            <person name="Beck S."/>
            <person name="Smith D.R."/>
            <person name="Rogers J."/>
        </authorList>
    </citation>
    <scope>NUCLEOTIDE SEQUENCE [LARGE SCALE GENOMIC DNA]</scope>
</reference>
<reference key="2">
    <citation type="submission" date="2005-09" db="EMBL/GenBank/DDBJ databases">
        <authorList>
            <person name="Mural R.J."/>
            <person name="Istrail S."/>
            <person name="Sutton G.G."/>
            <person name="Florea L."/>
            <person name="Halpern A.L."/>
            <person name="Mobarry C.M."/>
            <person name="Lippert R."/>
            <person name="Walenz B."/>
            <person name="Shatkay H."/>
            <person name="Dew I."/>
            <person name="Miller J.R."/>
            <person name="Flanigan M.J."/>
            <person name="Edwards N.J."/>
            <person name="Bolanos R."/>
            <person name="Fasulo D."/>
            <person name="Halldorsson B.V."/>
            <person name="Hannenhalli S."/>
            <person name="Turner R."/>
            <person name="Yooseph S."/>
            <person name="Lu F."/>
            <person name="Nusskern D.R."/>
            <person name="Shue B.C."/>
            <person name="Zheng X.H."/>
            <person name="Zhong F."/>
            <person name="Delcher A.L."/>
            <person name="Huson D.H."/>
            <person name="Kravitz S.A."/>
            <person name="Mouchard L."/>
            <person name="Reinert K."/>
            <person name="Remington K.A."/>
            <person name="Clark A.G."/>
            <person name="Waterman M.S."/>
            <person name="Eichler E.E."/>
            <person name="Adams M.D."/>
            <person name="Hunkapiller M.W."/>
            <person name="Myers E.W."/>
            <person name="Venter J.C."/>
        </authorList>
    </citation>
    <scope>NUCLEOTIDE SEQUENCE [LARGE SCALE GENOMIC DNA]</scope>
</reference>
<reference key="3">
    <citation type="journal article" date="2004" name="Genome Res.">
        <title>The status, quality, and expansion of the NIH full-length cDNA project: the Mammalian Gene Collection (MGC).</title>
        <authorList>
            <consortium name="The MGC Project Team"/>
        </authorList>
    </citation>
    <scope>NUCLEOTIDE SEQUENCE [LARGE SCALE MRNA] (ISOFORM ATE1-2)</scope>
    <source>
        <tissue>Testis</tissue>
    </source>
</reference>
<reference key="4">
    <citation type="journal article" date="1999" name="Mol. Cell. Biol.">
        <title>Alternative splicing results in differential expression, activity, and localization of the two forms of arginyl-tRNA-protein transferase, a component of the N-end rule pathway.</title>
        <authorList>
            <person name="Kwon Y.T."/>
            <person name="Kashina A.S."/>
            <person name="Varshavsky A."/>
        </authorList>
    </citation>
    <scope>NUCLEOTIDE SEQUENCE [MRNA] OF 5-518 (ISOFORMS ATE1-1 AND ATE1-2)</scope>
    <scope>SUBCELLULAR LOCATION</scope>
    <source>
        <tissue>Embryonic kidney</tissue>
    </source>
</reference>
<reference key="5">
    <citation type="journal article" date="2007" name="Science">
        <title>ATM and ATR substrate analysis reveals extensive protein networks responsive to DNA damage.</title>
        <authorList>
            <person name="Matsuoka S."/>
            <person name="Ballif B.A."/>
            <person name="Smogorzewska A."/>
            <person name="McDonald E.R. III"/>
            <person name="Hurov K.E."/>
            <person name="Luo J."/>
            <person name="Bakalarski C.E."/>
            <person name="Zhao Z."/>
            <person name="Solimini N."/>
            <person name="Lerenthal Y."/>
            <person name="Shiloh Y."/>
            <person name="Gygi S.P."/>
            <person name="Elledge S.J."/>
        </authorList>
    </citation>
    <scope>PHOSPHORYLATION [LARGE SCALE ANALYSIS] AT SER-169</scope>
    <scope>IDENTIFICATION BY MASS SPECTROMETRY [LARGE SCALE ANALYSIS]</scope>
    <source>
        <tissue>Embryonic kidney</tissue>
    </source>
</reference>
<reference key="6">
    <citation type="journal article" date="2011" name="BMC Syst. Biol.">
        <title>Initial characterization of the human central proteome.</title>
        <authorList>
            <person name="Burkard T.R."/>
            <person name="Planyavsky M."/>
            <person name="Kaupe I."/>
            <person name="Breitwieser F.P."/>
            <person name="Buerckstuemmer T."/>
            <person name="Bennett K.L."/>
            <person name="Superti-Furga G."/>
            <person name="Colinge J."/>
        </authorList>
    </citation>
    <scope>IDENTIFICATION BY MASS SPECTROMETRY [LARGE SCALE ANALYSIS]</scope>
</reference>
<reference key="7">
    <citation type="journal article" date="2013" name="J. Proteome Res.">
        <title>Toward a comprehensive characterization of a human cancer cell phosphoproteome.</title>
        <authorList>
            <person name="Zhou H."/>
            <person name="Di Palma S."/>
            <person name="Preisinger C."/>
            <person name="Peng M."/>
            <person name="Polat A.N."/>
            <person name="Heck A.J."/>
            <person name="Mohammed S."/>
        </authorList>
    </citation>
    <scope>PHOSPHORYLATION [LARGE SCALE ANALYSIS] AT SER-169</scope>
    <scope>IDENTIFICATION BY MASS SPECTROMETRY [LARGE SCALE ANALYSIS]</scope>
    <source>
        <tissue>Cervix carcinoma</tissue>
        <tissue>Erythroleukemia</tissue>
    </source>
</reference>
<reference key="8">
    <citation type="journal article" date="2021" name="Proc. Natl. Acad. Sci. U.S.A.">
        <title>The N-terminal cysteine is a dual sensor of oxygen and oxidative stress.</title>
        <authorList>
            <person name="Heo A.J."/>
            <person name="Kim S.B."/>
            <person name="Ji C.H."/>
            <person name="Han D."/>
            <person name="Lee S.J."/>
            <person name="Lee S.H."/>
            <person name="Lee M.J."/>
            <person name="Lee J.S."/>
            <person name="Ciechanover A."/>
            <person name="Kim B.Y."/>
            <person name="Kwon Y.T."/>
        </authorList>
    </citation>
    <scope>FUNCTION</scope>
    <scope>CATALYTIC ACTIVITY</scope>
</reference>
<keyword id="KW-0002">3D-structure</keyword>
<keyword id="KW-0012">Acyltransferase</keyword>
<keyword id="KW-0025">Alternative splicing</keyword>
<keyword id="KW-0963">Cytoplasm</keyword>
<keyword id="KW-0539">Nucleus</keyword>
<keyword id="KW-0597">Phosphoprotein</keyword>
<keyword id="KW-1267">Proteomics identification</keyword>
<keyword id="KW-1185">Reference proteome</keyword>
<keyword id="KW-0808">Transferase</keyword>
<keyword id="KW-0833">Ubl conjugation pathway</keyword>
<gene>
    <name evidence="6 9" type="primary">ATE1</name>
</gene>
<protein>
    <recommendedName>
        <fullName>Arginyl-tRNA--protein transferase 1</fullName>
        <shortName>Arginyltransferase 1</shortName>
        <shortName>R-transferase 1</shortName>
        <ecNumber evidence="3">2.3.2.8</ecNumber>
    </recommendedName>
    <alternativeName>
        <fullName>Arginine-tRNA--protein transferase 1</fullName>
    </alternativeName>
</protein>